<dbReference type="EC" id="2.5.1.55" evidence="1"/>
<dbReference type="EMBL" id="CP000931">
    <property type="protein sequence ID" value="ABZ77753.1"/>
    <property type="molecule type" value="Genomic_DNA"/>
</dbReference>
<dbReference type="RefSeq" id="WP_012278276.1">
    <property type="nucleotide sequence ID" value="NC_010334.1"/>
</dbReference>
<dbReference type="SMR" id="B0TR22"/>
<dbReference type="STRING" id="458817.Shal_3206"/>
<dbReference type="KEGG" id="shl:Shal_3206"/>
<dbReference type="eggNOG" id="COG2877">
    <property type="taxonomic scope" value="Bacteria"/>
</dbReference>
<dbReference type="HOGENOM" id="CLU_036666_0_0_6"/>
<dbReference type="OrthoDB" id="9776934at2"/>
<dbReference type="UniPathway" id="UPA00030"/>
<dbReference type="UniPathway" id="UPA00357">
    <property type="reaction ID" value="UER00474"/>
</dbReference>
<dbReference type="Proteomes" id="UP000001317">
    <property type="component" value="Chromosome"/>
</dbReference>
<dbReference type="GO" id="GO:0005737">
    <property type="term" value="C:cytoplasm"/>
    <property type="evidence" value="ECO:0007669"/>
    <property type="project" value="UniProtKB-SubCell"/>
</dbReference>
<dbReference type="GO" id="GO:0008676">
    <property type="term" value="F:3-deoxy-8-phosphooctulonate synthase activity"/>
    <property type="evidence" value="ECO:0007669"/>
    <property type="project" value="UniProtKB-UniRule"/>
</dbReference>
<dbReference type="GO" id="GO:0019294">
    <property type="term" value="P:keto-3-deoxy-D-manno-octulosonic acid biosynthetic process"/>
    <property type="evidence" value="ECO:0007669"/>
    <property type="project" value="UniProtKB-UniRule"/>
</dbReference>
<dbReference type="Gene3D" id="3.20.20.70">
    <property type="entry name" value="Aldolase class I"/>
    <property type="match status" value="1"/>
</dbReference>
<dbReference type="HAMAP" id="MF_00056">
    <property type="entry name" value="KDO8P_synth"/>
    <property type="match status" value="1"/>
</dbReference>
<dbReference type="InterPro" id="IPR013785">
    <property type="entry name" value="Aldolase_TIM"/>
</dbReference>
<dbReference type="InterPro" id="IPR006218">
    <property type="entry name" value="DAHP1/KDSA"/>
</dbReference>
<dbReference type="InterPro" id="IPR006269">
    <property type="entry name" value="KDO8P_synthase"/>
</dbReference>
<dbReference type="NCBIfam" id="TIGR01362">
    <property type="entry name" value="KDO8P_synth"/>
    <property type="match status" value="1"/>
</dbReference>
<dbReference type="NCBIfam" id="NF003543">
    <property type="entry name" value="PRK05198.1"/>
    <property type="match status" value="1"/>
</dbReference>
<dbReference type="NCBIfam" id="NF009109">
    <property type="entry name" value="PRK12457.1"/>
    <property type="match status" value="1"/>
</dbReference>
<dbReference type="PANTHER" id="PTHR21057">
    <property type="entry name" value="PHOSPHO-2-DEHYDRO-3-DEOXYHEPTONATE ALDOLASE"/>
    <property type="match status" value="1"/>
</dbReference>
<dbReference type="Pfam" id="PF00793">
    <property type="entry name" value="DAHP_synth_1"/>
    <property type="match status" value="1"/>
</dbReference>
<dbReference type="SUPFAM" id="SSF51569">
    <property type="entry name" value="Aldolase"/>
    <property type="match status" value="1"/>
</dbReference>
<comment type="catalytic activity">
    <reaction evidence="1">
        <text>D-arabinose 5-phosphate + phosphoenolpyruvate + H2O = 3-deoxy-alpha-D-manno-2-octulosonate-8-phosphate + phosphate</text>
        <dbReference type="Rhea" id="RHEA:14053"/>
        <dbReference type="ChEBI" id="CHEBI:15377"/>
        <dbReference type="ChEBI" id="CHEBI:43474"/>
        <dbReference type="ChEBI" id="CHEBI:57693"/>
        <dbReference type="ChEBI" id="CHEBI:58702"/>
        <dbReference type="ChEBI" id="CHEBI:85985"/>
        <dbReference type="EC" id="2.5.1.55"/>
    </reaction>
</comment>
<comment type="pathway">
    <text evidence="1">Carbohydrate biosynthesis; 3-deoxy-D-manno-octulosonate biosynthesis; 3-deoxy-D-manno-octulosonate from D-ribulose 5-phosphate: step 2/3.</text>
</comment>
<comment type="pathway">
    <text evidence="1">Bacterial outer membrane biogenesis; lipopolysaccharide biosynthesis.</text>
</comment>
<comment type="subcellular location">
    <subcellularLocation>
        <location evidence="1">Cytoplasm</location>
    </subcellularLocation>
</comment>
<comment type="similarity">
    <text evidence="1">Belongs to the KdsA family.</text>
</comment>
<evidence type="ECO:0000255" key="1">
    <source>
        <dbReference type="HAMAP-Rule" id="MF_00056"/>
    </source>
</evidence>
<proteinExistence type="inferred from homology"/>
<organism>
    <name type="scientific">Shewanella halifaxensis (strain HAW-EB4)</name>
    <dbReference type="NCBI Taxonomy" id="458817"/>
    <lineage>
        <taxon>Bacteria</taxon>
        <taxon>Pseudomonadati</taxon>
        <taxon>Pseudomonadota</taxon>
        <taxon>Gammaproteobacteria</taxon>
        <taxon>Alteromonadales</taxon>
        <taxon>Shewanellaceae</taxon>
        <taxon>Shewanella</taxon>
    </lineage>
</organism>
<feature type="chain" id="PRO_1000074990" description="2-dehydro-3-deoxyphosphooctonate aldolase">
    <location>
        <begin position="1"/>
        <end position="282"/>
    </location>
</feature>
<accession>B0TR22</accession>
<reference key="1">
    <citation type="submission" date="2008-01" db="EMBL/GenBank/DDBJ databases">
        <title>Complete sequence of Shewanella halifaxensis HAW-EB4.</title>
        <authorList>
            <consortium name="US DOE Joint Genome Institute"/>
            <person name="Copeland A."/>
            <person name="Lucas S."/>
            <person name="Lapidus A."/>
            <person name="Glavina del Rio T."/>
            <person name="Dalin E."/>
            <person name="Tice H."/>
            <person name="Bruce D."/>
            <person name="Goodwin L."/>
            <person name="Pitluck S."/>
            <person name="Sims D."/>
            <person name="Brettin T."/>
            <person name="Detter J.C."/>
            <person name="Han C."/>
            <person name="Kuske C.R."/>
            <person name="Schmutz J."/>
            <person name="Larimer F."/>
            <person name="Land M."/>
            <person name="Hauser L."/>
            <person name="Kyrpides N."/>
            <person name="Kim E."/>
            <person name="Zhao J.-S."/>
            <person name="Richardson P."/>
        </authorList>
    </citation>
    <scope>NUCLEOTIDE SEQUENCE [LARGE SCALE GENOMIC DNA]</scope>
    <source>
        <strain>HAW-EB4</strain>
    </source>
</reference>
<sequence>MSNKIISLGSIEIANDKPFVLFGGMNVLESRDLAMQIAETYAEVTQKLGIPYVFKASFDKANRSSVNSYRGPGMEEGLKIFEEIKSTFNLPLITDVHEVQQCAPVAEVVDVIQLPAFLARQTDLVVAMAKTGAIINVKKPQFLAPHEMRHIITKFNEAGNDEIMLCERGSSFGYNNLVVDMLGMDEMKQTGYPVIFDATHALQRPGGRSDSAGGRRAQATELARSGMALGLAGLFIEAHPDPDNAKCDGPCALPLHQLENYLTQMKAVDDLVKSFEPIDTSK</sequence>
<keyword id="KW-0963">Cytoplasm</keyword>
<keyword id="KW-0448">Lipopolysaccharide biosynthesis</keyword>
<keyword id="KW-0808">Transferase</keyword>
<name>KDSA_SHEHH</name>
<protein>
    <recommendedName>
        <fullName evidence="1">2-dehydro-3-deoxyphosphooctonate aldolase</fullName>
        <ecNumber evidence="1">2.5.1.55</ecNumber>
    </recommendedName>
    <alternativeName>
        <fullName evidence="1">3-deoxy-D-manno-octulosonic acid 8-phosphate synthase</fullName>
    </alternativeName>
    <alternativeName>
        <fullName evidence="1">KDO-8-phosphate synthase</fullName>
        <shortName evidence="1">KDO 8-P synthase</shortName>
        <shortName evidence="1">KDOPS</shortName>
    </alternativeName>
    <alternativeName>
        <fullName evidence="1">Phospho-2-dehydro-3-deoxyoctonate aldolase</fullName>
    </alternativeName>
</protein>
<gene>
    <name evidence="1" type="primary">kdsA</name>
    <name type="ordered locus">Shal_3206</name>
</gene>